<evidence type="ECO:0000255" key="1">
    <source>
        <dbReference type="HAMAP-Rule" id="MF_01197"/>
    </source>
</evidence>
<protein>
    <recommendedName>
        <fullName evidence="1">Cell division protein SepF</fullName>
    </recommendedName>
</protein>
<comment type="function">
    <text evidence="1">Cell division protein that is part of the divisome complex and is recruited early to the Z-ring. Probably stimulates Z-ring formation, perhaps through the cross-linking of FtsZ protofilaments. Its function overlaps with FtsA.</text>
</comment>
<comment type="subunit">
    <text evidence="1">Homodimer. Interacts with FtsZ.</text>
</comment>
<comment type="subcellular location">
    <subcellularLocation>
        <location evidence="1">Cytoplasm</location>
    </subcellularLocation>
    <text evidence="1">Localizes to the division site, in a FtsZ-dependent manner.</text>
</comment>
<comment type="similarity">
    <text evidence="1">Belongs to the SepF family.</text>
</comment>
<proteinExistence type="inferred from homology"/>
<keyword id="KW-0131">Cell cycle</keyword>
<keyword id="KW-0132">Cell division</keyword>
<keyword id="KW-0963">Cytoplasm</keyword>
<keyword id="KW-1185">Reference proteome</keyword>
<keyword id="KW-0717">Septation</keyword>
<dbReference type="EMBL" id="AP008230">
    <property type="protein sequence ID" value="BAE84676.1"/>
    <property type="molecule type" value="Genomic_DNA"/>
</dbReference>
<dbReference type="SMR" id="Q24TG6"/>
<dbReference type="STRING" id="138119.DSY2887"/>
<dbReference type="KEGG" id="dsy:DSY2887"/>
<dbReference type="eggNOG" id="COG1799">
    <property type="taxonomic scope" value="Bacteria"/>
</dbReference>
<dbReference type="HOGENOM" id="CLU_078499_4_1_9"/>
<dbReference type="Proteomes" id="UP000001946">
    <property type="component" value="Chromosome"/>
</dbReference>
<dbReference type="GO" id="GO:0005737">
    <property type="term" value="C:cytoplasm"/>
    <property type="evidence" value="ECO:0007669"/>
    <property type="project" value="UniProtKB-SubCell"/>
</dbReference>
<dbReference type="GO" id="GO:0000917">
    <property type="term" value="P:division septum assembly"/>
    <property type="evidence" value="ECO:0007669"/>
    <property type="project" value="UniProtKB-KW"/>
</dbReference>
<dbReference type="GO" id="GO:0043093">
    <property type="term" value="P:FtsZ-dependent cytokinesis"/>
    <property type="evidence" value="ECO:0007669"/>
    <property type="project" value="UniProtKB-UniRule"/>
</dbReference>
<dbReference type="Gene3D" id="3.30.110.150">
    <property type="entry name" value="SepF-like protein"/>
    <property type="match status" value="1"/>
</dbReference>
<dbReference type="HAMAP" id="MF_01197">
    <property type="entry name" value="SepF"/>
    <property type="match status" value="1"/>
</dbReference>
<dbReference type="InterPro" id="IPR023052">
    <property type="entry name" value="Cell_div_SepF"/>
</dbReference>
<dbReference type="InterPro" id="IPR007561">
    <property type="entry name" value="Cell_div_SepF/SepF-rel"/>
</dbReference>
<dbReference type="InterPro" id="IPR038594">
    <property type="entry name" value="SepF-like_sf"/>
</dbReference>
<dbReference type="PANTHER" id="PTHR35798">
    <property type="entry name" value="CELL DIVISION PROTEIN SEPF"/>
    <property type="match status" value="1"/>
</dbReference>
<dbReference type="PANTHER" id="PTHR35798:SF1">
    <property type="entry name" value="CELL DIVISION PROTEIN SEPF"/>
    <property type="match status" value="1"/>
</dbReference>
<dbReference type="Pfam" id="PF04472">
    <property type="entry name" value="SepF"/>
    <property type="match status" value="1"/>
</dbReference>
<sequence>MTMAKLFDKVIGIMGFADDDYEDDYFEEEEEKEEVREETRGTGNRKGAQVVSIHTQKQIKVVVMEPQAFEDSQSIADQLRNRRPVIVNLENAERNLAKRIVDFVSGATYALGGNMQKVGNGIFLFVPNNVDISGEMKDDFKEKGFFWSLTK</sequence>
<feature type="chain" id="PRO_0000334005" description="Cell division protein SepF">
    <location>
        <begin position="1"/>
        <end position="151"/>
    </location>
</feature>
<reference key="1">
    <citation type="journal article" date="2006" name="J. Bacteriol.">
        <title>Complete genome sequence of the dehalorespiring bacterium Desulfitobacterium hafniense Y51 and comparison with Dehalococcoides ethenogenes 195.</title>
        <authorList>
            <person name="Nonaka H."/>
            <person name="Keresztes G."/>
            <person name="Shinoda Y."/>
            <person name="Ikenaga Y."/>
            <person name="Abe M."/>
            <person name="Naito K."/>
            <person name="Inatomi K."/>
            <person name="Furukawa K."/>
            <person name="Inui M."/>
            <person name="Yukawa H."/>
        </authorList>
    </citation>
    <scope>NUCLEOTIDE SEQUENCE [LARGE SCALE GENOMIC DNA]</scope>
    <source>
        <strain>Y51</strain>
    </source>
</reference>
<name>SEPF_DESHY</name>
<accession>Q24TG6</accession>
<gene>
    <name evidence="1" type="primary">sepF</name>
    <name type="ordered locus">DSY2887</name>
</gene>
<organism>
    <name type="scientific">Desulfitobacterium hafniense (strain Y51)</name>
    <dbReference type="NCBI Taxonomy" id="138119"/>
    <lineage>
        <taxon>Bacteria</taxon>
        <taxon>Bacillati</taxon>
        <taxon>Bacillota</taxon>
        <taxon>Clostridia</taxon>
        <taxon>Eubacteriales</taxon>
        <taxon>Desulfitobacteriaceae</taxon>
        <taxon>Desulfitobacterium</taxon>
    </lineage>
</organism>